<organism>
    <name type="scientific">Staphylococcus aureus (strain JH1)</name>
    <dbReference type="NCBI Taxonomy" id="359787"/>
    <lineage>
        <taxon>Bacteria</taxon>
        <taxon>Bacillati</taxon>
        <taxon>Bacillota</taxon>
        <taxon>Bacilli</taxon>
        <taxon>Bacillales</taxon>
        <taxon>Staphylococcaceae</taxon>
        <taxon>Staphylococcus</taxon>
    </lineage>
</organism>
<protein>
    <recommendedName>
        <fullName evidence="1">ATP synthase subunit beta</fullName>
        <ecNumber evidence="1">7.1.2.2</ecNumber>
    </recommendedName>
    <alternativeName>
        <fullName evidence="1">ATP synthase F1 sector subunit beta</fullName>
    </alternativeName>
    <alternativeName>
        <fullName evidence="1">F-ATPase subunit beta</fullName>
    </alternativeName>
</protein>
<keyword id="KW-0066">ATP synthesis</keyword>
<keyword id="KW-0067">ATP-binding</keyword>
<keyword id="KW-1003">Cell membrane</keyword>
<keyword id="KW-0139">CF(1)</keyword>
<keyword id="KW-0375">Hydrogen ion transport</keyword>
<keyword id="KW-0406">Ion transport</keyword>
<keyword id="KW-0472">Membrane</keyword>
<keyword id="KW-0547">Nucleotide-binding</keyword>
<keyword id="KW-1278">Translocase</keyword>
<keyword id="KW-0813">Transport</keyword>
<proteinExistence type="inferred from homology"/>
<reference key="1">
    <citation type="submission" date="2007-06" db="EMBL/GenBank/DDBJ databases">
        <title>Complete sequence of chromosome of Staphylococcus aureus subsp. aureus JH1.</title>
        <authorList>
            <consortium name="US DOE Joint Genome Institute"/>
            <person name="Copeland A."/>
            <person name="Lucas S."/>
            <person name="Lapidus A."/>
            <person name="Barry K."/>
            <person name="Detter J.C."/>
            <person name="Glavina del Rio T."/>
            <person name="Hammon N."/>
            <person name="Israni S."/>
            <person name="Dalin E."/>
            <person name="Tice H."/>
            <person name="Pitluck S."/>
            <person name="Chain P."/>
            <person name="Malfatti S."/>
            <person name="Shin M."/>
            <person name="Vergez L."/>
            <person name="Schmutz J."/>
            <person name="Larimer F."/>
            <person name="Land M."/>
            <person name="Hauser L."/>
            <person name="Kyrpides N."/>
            <person name="Ivanova N."/>
            <person name="Tomasz A."/>
            <person name="Richardson P."/>
        </authorList>
    </citation>
    <scope>NUCLEOTIDE SEQUENCE [LARGE SCALE GENOMIC DNA]</scope>
    <source>
        <strain>JH1</strain>
    </source>
</reference>
<comment type="function">
    <text evidence="1">Produces ATP from ADP in the presence of a proton gradient across the membrane. The catalytic sites are hosted primarily by the beta subunits.</text>
</comment>
<comment type="catalytic activity">
    <reaction evidence="1">
        <text>ATP + H2O + 4 H(+)(in) = ADP + phosphate + 5 H(+)(out)</text>
        <dbReference type="Rhea" id="RHEA:57720"/>
        <dbReference type="ChEBI" id="CHEBI:15377"/>
        <dbReference type="ChEBI" id="CHEBI:15378"/>
        <dbReference type="ChEBI" id="CHEBI:30616"/>
        <dbReference type="ChEBI" id="CHEBI:43474"/>
        <dbReference type="ChEBI" id="CHEBI:456216"/>
        <dbReference type="EC" id="7.1.2.2"/>
    </reaction>
</comment>
<comment type="subunit">
    <text evidence="1">F-type ATPases have 2 components, CF(1) - the catalytic core - and CF(0) - the membrane proton channel. CF(1) has five subunits: alpha(3), beta(3), gamma(1), delta(1), epsilon(1). CF(0) has three main subunits: a(1), b(2) and c(9-12). The alpha and beta chains form an alternating ring which encloses part of the gamma chain. CF(1) is attached to CF(0) by a central stalk formed by the gamma and epsilon chains, while a peripheral stalk is formed by the delta and b chains.</text>
</comment>
<comment type="subcellular location">
    <subcellularLocation>
        <location evidence="1">Cell membrane</location>
        <topology evidence="1">Peripheral membrane protein</topology>
    </subcellularLocation>
</comment>
<comment type="similarity">
    <text evidence="1">Belongs to the ATPase alpha/beta chains family.</text>
</comment>
<accession>A6U3I8</accession>
<dbReference type="EC" id="7.1.2.2" evidence="1"/>
<dbReference type="EMBL" id="CP000736">
    <property type="protein sequence ID" value="ABR53006.1"/>
    <property type="molecule type" value="Genomic_DNA"/>
</dbReference>
<dbReference type="SMR" id="A6U3I8"/>
<dbReference type="KEGG" id="sah:SaurJH1_2177"/>
<dbReference type="HOGENOM" id="CLU_022398_0_2_9"/>
<dbReference type="GO" id="GO:0005886">
    <property type="term" value="C:plasma membrane"/>
    <property type="evidence" value="ECO:0007669"/>
    <property type="project" value="UniProtKB-SubCell"/>
</dbReference>
<dbReference type="GO" id="GO:0045259">
    <property type="term" value="C:proton-transporting ATP synthase complex"/>
    <property type="evidence" value="ECO:0007669"/>
    <property type="project" value="UniProtKB-KW"/>
</dbReference>
<dbReference type="GO" id="GO:0005524">
    <property type="term" value="F:ATP binding"/>
    <property type="evidence" value="ECO:0007669"/>
    <property type="project" value="UniProtKB-UniRule"/>
</dbReference>
<dbReference type="GO" id="GO:0016887">
    <property type="term" value="F:ATP hydrolysis activity"/>
    <property type="evidence" value="ECO:0007669"/>
    <property type="project" value="InterPro"/>
</dbReference>
<dbReference type="GO" id="GO:0046933">
    <property type="term" value="F:proton-transporting ATP synthase activity, rotational mechanism"/>
    <property type="evidence" value="ECO:0007669"/>
    <property type="project" value="UniProtKB-UniRule"/>
</dbReference>
<dbReference type="CDD" id="cd18110">
    <property type="entry name" value="ATP-synt_F1_beta_C"/>
    <property type="match status" value="1"/>
</dbReference>
<dbReference type="CDD" id="cd18115">
    <property type="entry name" value="ATP-synt_F1_beta_N"/>
    <property type="match status" value="1"/>
</dbReference>
<dbReference type="CDD" id="cd01133">
    <property type="entry name" value="F1-ATPase_beta_CD"/>
    <property type="match status" value="1"/>
</dbReference>
<dbReference type="FunFam" id="1.10.1140.10:FF:000001">
    <property type="entry name" value="ATP synthase subunit beta"/>
    <property type="match status" value="1"/>
</dbReference>
<dbReference type="FunFam" id="2.40.10.170:FF:000005">
    <property type="entry name" value="ATP synthase subunit beta"/>
    <property type="match status" value="1"/>
</dbReference>
<dbReference type="FunFam" id="3.40.50.300:FF:000004">
    <property type="entry name" value="ATP synthase subunit beta"/>
    <property type="match status" value="1"/>
</dbReference>
<dbReference type="Gene3D" id="2.40.10.170">
    <property type="match status" value="1"/>
</dbReference>
<dbReference type="Gene3D" id="1.10.1140.10">
    <property type="entry name" value="Bovine Mitochondrial F1-atpase, Atp Synthase Beta Chain, Chain D, domain 3"/>
    <property type="match status" value="1"/>
</dbReference>
<dbReference type="Gene3D" id="3.40.50.300">
    <property type="entry name" value="P-loop containing nucleotide triphosphate hydrolases"/>
    <property type="match status" value="1"/>
</dbReference>
<dbReference type="HAMAP" id="MF_01347">
    <property type="entry name" value="ATP_synth_beta_bact"/>
    <property type="match status" value="1"/>
</dbReference>
<dbReference type="InterPro" id="IPR003593">
    <property type="entry name" value="AAA+_ATPase"/>
</dbReference>
<dbReference type="InterPro" id="IPR055190">
    <property type="entry name" value="ATP-synt_VA_C"/>
</dbReference>
<dbReference type="InterPro" id="IPR005722">
    <property type="entry name" value="ATP_synth_F1_bsu"/>
</dbReference>
<dbReference type="InterPro" id="IPR020003">
    <property type="entry name" value="ATPase_a/bsu_AS"/>
</dbReference>
<dbReference type="InterPro" id="IPR050053">
    <property type="entry name" value="ATPase_alpha/beta_chains"/>
</dbReference>
<dbReference type="InterPro" id="IPR004100">
    <property type="entry name" value="ATPase_F1/V1/A1_a/bsu_N"/>
</dbReference>
<dbReference type="InterPro" id="IPR036121">
    <property type="entry name" value="ATPase_F1/V1/A1_a/bsu_N_sf"/>
</dbReference>
<dbReference type="InterPro" id="IPR000194">
    <property type="entry name" value="ATPase_F1/V1/A1_a/bsu_nucl-bd"/>
</dbReference>
<dbReference type="InterPro" id="IPR024034">
    <property type="entry name" value="ATPase_F1/V1_b/a_C"/>
</dbReference>
<dbReference type="InterPro" id="IPR027417">
    <property type="entry name" value="P-loop_NTPase"/>
</dbReference>
<dbReference type="NCBIfam" id="TIGR01039">
    <property type="entry name" value="atpD"/>
    <property type="match status" value="1"/>
</dbReference>
<dbReference type="PANTHER" id="PTHR15184">
    <property type="entry name" value="ATP SYNTHASE"/>
    <property type="match status" value="1"/>
</dbReference>
<dbReference type="PANTHER" id="PTHR15184:SF71">
    <property type="entry name" value="ATP SYNTHASE SUBUNIT BETA, MITOCHONDRIAL"/>
    <property type="match status" value="1"/>
</dbReference>
<dbReference type="Pfam" id="PF00006">
    <property type="entry name" value="ATP-synt_ab"/>
    <property type="match status" value="1"/>
</dbReference>
<dbReference type="Pfam" id="PF02874">
    <property type="entry name" value="ATP-synt_ab_N"/>
    <property type="match status" value="1"/>
</dbReference>
<dbReference type="Pfam" id="PF22919">
    <property type="entry name" value="ATP-synt_VA_C"/>
    <property type="match status" value="1"/>
</dbReference>
<dbReference type="SMART" id="SM00382">
    <property type="entry name" value="AAA"/>
    <property type="match status" value="1"/>
</dbReference>
<dbReference type="SUPFAM" id="SSF47917">
    <property type="entry name" value="C-terminal domain of alpha and beta subunits of F1 ATP synthase"/>
    <property type="match status" value="1"/>
</dbReference>
<dbReference type="SUPFAM" id="SSF50615">
    <property type="entry name" value="N-terminal domain of alpha and beta subunits of F1 ATP synthase"/>
    <property type="match status" value="1"/>
</dbReference>
<dbReference type="SUPFAM" id="SSF52540">
    <property type="entry name" value="P-loop containing nucleoside triphosphate hydrolases"/>
    <property type="match status" value="1"/>
</dbReference>
<dbReference type="PROSITE" id="PS00152">
    <property type="entry name" value="ATPASE_ALPHA_BETA"/>
    <property type="match status" value="1"/>
</dbReference>
<name>ATPB_STAA2</name>
<feature type="chain" id="PRO_1000086927" description="ATP synthase subunit beta">
    <location>
        <begin position="1"/>
        <end position="470"/>
    </location>
</feature>
<feature type="binding site" evidence="1">
    <location>
        <begin position="155"/>
        <end position="162"/>
    </location>
    <ligand>
        <name>ATP</name>
        <dbReference type="ChEBI" id="CHEBI:30616"/>
    </ligand>
</feature>
<sequence length="470" mass="51400">MGIGRVTQVMGPVIDVRFEHNEVPKINNALVIDVPKEEGTIQLTLEVALQLGDDVVRTIAMDSTDGVQRGMDVKDTGKEISVPVGDETLGRVFNVLGETIDLKEEISDSVRRDPIHRQAPAFDELSTEVQILETGIKVVDLLAPYIKGGKIGLFGGAGVGKTVLIQELINNIAQEHGGISVFAGVGERTREGNDLYFEMSDSGVIKKTAMVFGQMNEPPGARMRVALSGLTMAEYFRDEQGQDVLLFIDNIFRFTQAGSEVSALLGRMPSAVGYQPTLATEMGQLQERITSTTKGSVTSIQAVFVPADDYTDPAPATAFAHLDATTNLERKLTEMGIYPAVDPLASTSRALEPSIVGQEHYEVARDVQSTLQKYRELQDIIAILGMDELSDEDKQTVERARRIQFFLSQNFHVAEQFTGQKGSYVPVKTTVANFKDILDGKYDHIPEDAFRLVGSMDDVIAKAKDMGVEV</sequence>
<evidence type="ECO:0000255" key="1">
    <source>
        <dbReference type="HAMAP-Rule" id="MF_01347"/>
    </source>
</evidence>
<gene>
    <name evidence="1" type="primary">atpD</name>
    <name type="ordered locus">SaurJH1_2177</name>
</gene>